<gene>
    <name evidence="1" type="primary">dtd</name>
    <name type="ordered locus">Lreu_0722</name>
</gene>
<comment type="function">
    <text evidence="1">An aminoacyl-tRNA editing enzyme that deacylates mischarged D-aminoacyl-tRNAs. Also deacylates mischarged glycyl-tRNA(Ala), protecting cells against glycine mischarging by AlaRS. Acts via tRNA-based rather than protein-based catalysis; rejects L-amino acids rather than detecting D-amino acids in the active site. By recycling D-aminoacyl-tRNA to D-amino acids and free tRNA molecules, this enzyme counteracts the toxicity associated with the formation of D-aminoacyl-tRNA entities in vivo and helps enforce protein L-homochirality.</text>
</comment>
<comment type="catalytic activity">
    <reaction evidence="1">
        <text>glycyl-tRNA(Ala) + H2O = tRNA(Ala) + glycine + H(+)</text>
        <dbReference type="Rhea" id="RHEA:53744"/>
        <dbReference type="Rhea" id="RHEA-COMP:9657"/>
        <dbReference type="Rhea" id="RHEA-COMP:13640"/>
        <dbReference type="ChEBI" id="CHEBI:15377"/>
        <dbReference type="ChEBI" id="CHEBI:15378"/>
        <dbReference type="ChEBI" id="CHEBI:57305"/>
        <dbReference type="ChEBI" id="CHEBI:78442"/>
        <dbReference type="ChEBI" id="CHEBI:78522"/>
        <dbReference type="EC" id="3.1.1.96"/>
    </reaction>
</comment>
<comment type="catalytic activity">
    <reaction evidence="1">
        <text>a D-aminoacyl-tRNA + H2O = a tRNA + a D-alpha-amino acid + H(+)</text>
        <dbReference type="Rhea" id="RHEA:13953"/>
        <dbReference type="Rhea" id="RHEA-COMP:10123"/>
        <dbReference type="Rhea" id="RHEA-COMP:10124"/>
        <dbReference type="ChEBI" id="CHEBI:15377"/>
        <dbReference type="ChEBI" id="CHEBI:15378"/>
        <dbReference type="ChEBI" id="CHEBI:59871"/>
        <dbReference type="ChEBI" id="CHEBI:78442"/>
        <dbReference type="ChEBI" id="CHEBI:79333"/>
        <dbReference type="EC" id="3.1.1.96"/>
    </reaction>
</comment>
<comment type="subunit">
    <text evidence="1">Homodimer.</text>
</comment>
<comment type="subcellular location">
    <subcellularLocation>
        <location evidence="1">Cytoplasm</location>
    </subcellularLocation>
</comment>
<comment type="domain">
    <text evidence="1">A Gly-cisPro motif from one monomer fits into the active site of the other monomer to allow specific chiral rejection of L-amino acids.</text>
</comment>
<comment type="similarity">
    <text evidence="1">Belongs to the DTD family.</text>
</comment>
<sequence length="145" mass="15996">MRVVLQKVNHAAVSIDDEVVGKIGLGYFLLVGFAPDDTEEKLNYLVHKITNLRVFEDENGKMNKGLRDVNGAILSVSQFTLYADTKHGNRPGFSQAASPEIAEPLYDLFNQKLAATGIPVETGHFGAMMKIDLENDGPTTIIYER</sequence>
<feature type="chain" id="PRO_1000060909" description="D-aminoacyl-tRNA deacylase">
    <location>
        <begin position="1"/>
        <end position="145"/>
    </location>
</feature>
<feature type="short sequence motif" description="Gly-cisPro motif, important for rejection of L-amino acids" evidence="1">
    <location>
        <begin position="137"/>
        <end position="138"/>
    </location>
</feature>
<reference key="1">
    <citation type="journal article" date="2011" name="PLoS Genet.">
        <title>The evolution of host specialization in the vertebrate gut symbiont Lactobacillus reuteri.</title>
        <authorList>
            <person name="Frese S.A."/>
            <person name="Benson A.K."/>
            <person name="Tannock G.W."/>
            <person name="Loach D.M."/>
            <person name="Kim J."/>
            <person name="Zhang M."/>
            <person name="Oh P.L."/>
            <person name="Heng N.C."/>
            <person name="Patil P.B."/>
            <person name="Juge N."/>
            <person name="Mackenzie D.A."/>
            <person name="Pearson B.M."/>
            <person name="Lapidus A."/>
            <person name="Dalin E."/>
            <person name="Tice H."/>
            <person name="Goltsman E."/>
            <person name="Land M."/>
            <person name="Hauser L."/>
            <person name="Ivanova N."/>
            <person name="Kyrpides N.C."/>
            <person name="Walter J."/>
        </authorList>
    </citation>
    <scope>NUCLEOTIDE SEQUENCE [LARGE SCALE GENOMIC DNA]</scope>
    <source>
        <strain>DSM 20016</strain>
    </source>
</reference>
<name>DTD_LIMRD</name>
<accession>A5VJG2</accession>
<organism>
    <name type="scientific">Limosilactobacillus reuteri (strain DSM 20016)</name>
    <name type="common">Lactobacillus reuteri</name>
    <dbReference type="NCBI Taxonomy" id="557436"/>
    <lineage>
        <taxon>Bacteria</taxon>
        <taxon>Bacillati</taxon>
        <taxon>Bacillota</taxon>
        <taxon>Bacilli</taxon>
        <taxon>Lactobacillales</taxon>
        <taxon>Lactobacillaceae</taxon>
        <taxon>Limosilactobacillus</taxon>
    </lineage>
</organism>
<keyword id="KW-0963">Cytoplasm</keyword>
<keyword id="KW-0378">Hydrolase</keyword>
<keyword id="KW-1185">Reference proteome</keyword>
<keyword id="KW-0694">RNA-binding</keyword>
<keyword id="KW-0820">tRNA-binding</keyword>
<evidence type="ECO:0000255" key="1">
    <source>
        <dbReference type="HAMAP-Rule" id="MF_00518"/>
    </source>
</evidence>
<protein>
    <recommendedName>
        <fullName evidence="1">D-aminoacyl-tRNA deacylase</fullName>
        <shortName evidence="1">DTD</shortName>
        <ecNumber evidence="1">3.1.1.96</ecNumber>
    </recommendedName>
    <alternativeName>
        <fullName evidence="1">Gly-tRNA(Ala) deacylase</fullName>
    </alternativeName>
</protein>
<proteinExistence type="inferred from homology"/>
<dbReference type="EC" id="3.1.1.96" evidence="1"/>
<dbReference type="EMBL" id="CP000705">
    <property type="protein sequence ID" value="ABQ82986.1"/>
    <property type="molecule type" value="Genomic_DNA"/>
</dbReference>
<dbReference type="RefSeq" id="WP_011953438.1">
    <property type="nucleotide sequence ID" value="NC_009513.1"/>
</dbReference>
<dbReference type="SMR" id="A5VJG2"/>
<dbReference type="STRING" id="557436.Lreu_0722"/>
<dbReference type="KEGG" id="lre:Lreu_0722"/>
<dbReference type="eggNOG" id="COG1490">
    <property type="taxonomic scope" value="Bacteria"/>
</dbReference>
<dbReference type="HOGENOM" id="CLU_076901_1_0_9"/>
<dbReference type="Proteomes" id="UP000001991">
    <property type="component" value="Chromosome"/>
</dbReference>
<dbReference type="GO" id="GO:0005737">
    <property type="term" value="C:cytoplasm"/>
    <property type="evidence" value="ECO:0007669"/>
    <property type="project" value="UniProtKB-SubCell"/>
</dbReference>
<dbReference type="GO" id="GO:0051500">
    <property type="term" value="F:D-tyrosyl-tRNA(Tyr) deacylase activity"/>
    <property type="evidence" value="ECO:0007669"/>
    <property type="project" value="TreeGrafter"/>
</dbReference>
<dbReference type="GO" id="GO:0106026">
    <property type="term" value="F:Gly-tRNA(Ala) deacylase activity"/>
    <property type="evidence" value="ECO:0007669"/>
    <property type="project" value="UniProtKB-UniRule"/>
</dbReference>
<dbReference type="GO" id="GO:0043908">
    <property type="term" value="F:Ser(Gly)-tRNA(Ala) hydrolase activity"/>
    <property type="evidence" value="ECO:0007669"/>
    <property type="project" value="UniProtKB-UniRule"/>
</dbReference>
<dbReference type="GO" id="GO:0000049">
    <property type="term" value="F:tRNA binding"/>
    <property type="evidence" value="ECO:0007669"/>
    <property type="project" value="UniProtKB-UniRule"/>
</dbReference>
<dbReference type="GO" id="GO:0019478">
    <property type="term" value="P:D-amino acid catabolic process"/>
    <property type="evidence" value="ECO:0007669"/>
    <property type="project" value="UniProtKB-UniRule"/>
</dbReference>
<dbReference type="CDD" id="cd00563">
    <property type="entry name" value="Dtyr_deacylase"/>
    <property type="match status" value="1"/>
</dbReference>
<dbReference type="FunFam" id="3.50.80.10:FF:000001">
    <property type="entry name" value="D-aminoacyl-tRNA deacylase"/>
    <property type="match status" value="1"/>
</dbReference>
<dbReference type="Gene3D" id="3.50.80.10">
    <property type="entry name" value="D-tyrosyl-tRNA(Tyr) deacylase"/>
    <property type="match status" value="1"/>
</dbReference>
<dbReference type="HAMAP" id="MF_00518">
    <property type="entry name" value="Deacylase_Dtd"/>
    <property type="match status" value="1"/>
</dbReference>
<dbReference type="InterPro" id="IPR003732">
    <property type="entry name" value="Daa-tRNA_deacyls_DTD"/>
</dbReference>
<dbReference type="InterPro" id="IPR023509">
    <property type="entry name" value="DTD-like_sf"/>
</dbReference>
<dbReference type="NCBIfam" id="TIGR00256">
    <property type="entry name" value="D-aminoacyl-tRNA deacylase"/>
    <property type="match status" value="1"/>
</dbReference>
<dbReference type="PANTHER" id="PTHR10472:SF5">
    <property type="entry name" value="D-AMINOACYL-TRNA DEACYLASE 1"/>
    <property type="match status" value="1"/>
</dbReference>
<dbReference type="PANTHER" id="PTHR10472">
    <property type="entry name" value="D-TYROSYL-TRNA TYR DEACYLASE"/>
    <property type="match status" value="1"/>
</dbReference>
<dbReference type="Pfam" id="PF02580">
    <property type="entry name" value="Tyr_Deacylase"/>
    <property type="match status" value="1"/>
</dbReference>
<dbReference type="SUPFAM" id="SSF69500">
    <property type="entry name" value="DTD-like"/>
    <property type="match status" value="1"/>
</dbReference>